<feature type="chain" id="PRO_0000267560" description="Type III pantothenate kinase">
    <location>
        <begin position="1"/>
        <end position="259"/>
    </location>
</feature>
<feature type="active site" description="Proton acceptor" evidence="1">
    <location>
        <position position="110"/>
    </location>
</feature>
<feature type="binding site" evidence="1">
    <location>
        <begin position="6"/>
        <end position="13"/>
    </location>
    <ligand>
        <name>ATP</name>
        <dbReference type="ChEBI" id="CHEBI:30616"/>
    </ligand>
</feature>
<feature type="binding site" evidence="1">
    <location>
        <begin position="108"/>
        <end position="111"/>
    </location>
    <ligand>
        <name>substrate</name>
    </ligand>
</feature>
<feature type="binding site" evidence="1">
    <location>
        <position position="130"/>
    </location>
    <ligand>
        <name>K(+)</name>
        <dbReference type="ChEBI" id="CHEBI:29103"/>
    </ligand>
</feature>
<feature type="binding site" evidence="1">
    <location>
        <position position="133"/>
    </location>
    <ligand>
        <name>ATP</name>
        <dbReference type="ChEBI" id="CHEBI:30616"/>
    </ligand>
</feature>
<feature type="binding site" evidence="1">
    <location>
        <position position="185"/>
    </location>
    <ligand>
        <name>substrate</name>
    </ligand>
</feature>
<protein>
    <recommendedName>
        <fullName evidence="1">Type III pantothenate kinase</fullName>
        <ecNumber evidence="1">2.7.1.33</ecNumber>
    </recommendedName>
    <alternativeName>
        <fullName evidence="1">PanK-III</fullName>
    </alternativeName>
    <alternativeName>
        <fullName evidence="1">Pantothenic acid kinase</fullName>
    </alternativeName>
</protein>
<accession>Q0APX5</accession>
<organism>
    <name type="scientific">Maricaulis maris (strain MCS10)</name>
    <name type="common">Caulobacter maris</name>
    <dbReference type="NCBI Taxonomy" id="394221"/>
    <lineage>
        <taxon>Bacteria</taxon>
        <taxon>Pseudomonadati</taxon>
        <taxon>Pseudomonadota</taxon>
        <taxon>Alphaproteobacteria</taxon>
        <taxon>Maricaulales</taxon>
        <taxon>Maricaulaceae</taxon>
        <taxon>Maricaulis</taxon>
    </lineage>
</organism>
<sequence>MLLAIDCGNTNTLFAIHDGNDWVAQWRSGTDSTRTADEHAVWLSQLMGLQGRSFADITACVISTVVPQALFNLRNLSRRYFKAEPVIVGEPGVRMDIEVRLDRPQDAGADRLVNALGARAVYDGALIIIDSGTATTFDVIAADGAFEGGIIAPGINLSMQALHGAAAKLPRVAIAKPARVMGKDTVSAMQSGVFWGYIDLIDGLVQRLKSEYAQPMTVVATGGVVSLFDGASKAIDHYDADLTIRGLLEVWKLNGGADT</sequence>
<proteinExistence type="inferred from homology"/>
<evidence type="ECO:0000255" key="1">
    <source>
        <dbReference type="HAMAP-Rule" id="MF_01274"/>
    </source>
</evidence>
<keyword id="KW-0067">ATP-binding</keyword>
<keyword id="KW-0173">Coenzyme A biosynthesis</keyword>
<keyword id="KW-0963">Cytoplasm</keyword>
<keyword id="KW-0418">Kinase</keyword>
<keyword id="KW-0479">Metal-binding</keyword>
<keyword id="KW-0547">Nucleotide-binding</keyword>
<keyword id="KW-0630">Potassium</keyword>
<keyword id="KW-1185">Reference proteome</keyword>
<keyword id="KW-0808">Transferase</keyword>
<gene>
    <name evidence="1" type="primary">coaX</name>
    <name type="ordered locus">Mmar10_1370</name>
</gene>
<reference key="1">
    <citation type="submission" date="2006-08" db="EMBL/GenBank/DDBJ databases">
        <title>Complete sequence of Maricaulis maris MCS10.</title>
        <authorList>
            <consortium name="US DOE Joint Genome Institute"/>
            <person name="Copeland A."/>
            <person name="Lucas S."/>
            <person name="Lapidus A."/>
            <person name="Barry K."/>
            <person name="Detter J.C."/>
            <person name="Glavina del Rio T."/>
            <person name="Hammon N."/>
            <person name="Israni S."/>
            <person name="Dalin E."/>
            <person name="Tice H."/>
            <person name="Pitluck S."/>
            <person name="Saunders E."/>
            <person name="Brettin T."/>
            <person name="Bruce D."/>
            <person name="Han C."/>
            <person name="Tapia R."/>
            <person name="Gilna P."/>
            <person name="Schmutz J."/>
            <person name="Larimer F."/>
            <person name="Land M."/>
            <person name="Hauser L."/>
            <person name="Kyrpides N."/>
            <person name="Mikhailova N."/>
            <person name="Viollier P."/>
            <person name="Stephens C."/>
            <person name="Richardson P."/>
        </authorList>
    </citation>
    <scope>NUCLEOTIDE SEQUENCE [LARGE SCALE GENOMIC DNA]</scope>
    <source>
        <strain>MCS10</strain>
    </source>
</reference>
<name>COAX_MARMM</name>
<dbReference type="EC" id="2.7.1.33" evidence="1"/>
<dbReference type="EMBL" id="CP000449">
    <property type="protein sequence ID" value="ABI65662.1"/>
    <property type="molecule type" value="Genomic_DNA"/>
</dbReference>
<dbReference type="RefSeq" id="WP_011643309.1">
    <property type="nucleotide sequence ID" value="NC_008347.1"/>
</dbReference>
<dbReference type="SMR" id="Q0APX5"/>
<dbReference type="STRING" id="394221.Mmar10_1370"/>
<dbReference type="KEGG" id="mmr:Mmar10_1370"/>
<dbReference type="eggNOG" id="COG1521">
    <property type="taxonomic scope" value="Bacteria"/>
</dbReference>
<dbReference type="HOGENOM" id="CLU_066627_1_0_5"/>
<dbReference type="OrthoDB" id="9804707at2"/>
<dbReference type="UniPathway" id="UPA00241">
    <property type="reaction ID" value="UER00352"/>
</dbReference>
<dbReference type="Proteomes" id="UP000001964">
    <property type="component" value="Chromosome"/>
</dbReference>
<dbReference type="GO" id="GO:0005737">
    <property type="term" value="C:cytoplasm"/>
    <property type="evidence" value="ECO:0007669"/>
    <property type="project" value="UniProtKB-SubCell"/>
</dbReference>
<dbReference type="GO" id="GO:0005524">
    <property type="term" value="F:ATP binding"/>
    <property type="evidence" value="ECO:0007669"/>
    <property type="project" value="UniProtKB-UniRule"/>
</dbReference>
<dbReference type="GO" id="GO:0046872">
    <property type="term" value="F:metal ion binding"/>
    <property type="evidence" value="ECO:0007669"/>
    <property type="project" value="UniProtKB-KW"/>
</dbReference>
<dbReference type="GO" id="GO:0004594">
    <property type="term" value="F:pantothenate kinase activity"/>
    <property type="evidence" value="ECO:0007669"/>
    <property type="project" value="UniProtKB-UniRule"/>
</dbReference>
<dbReference type="GO" id="GO:0015937">
    <property type="term" value="P:coenzyme A biosynthetic process"/>
    <property type="evidence" value="ECO:0007669"/>
    <property type="project" value="UniProtKB-UniRule"/>
</dbReference>
<dbReference type="CDD" id="cd24015">
    <property type="entry name" value="ASKHA_NBD_PanK-III"/>
    <property type="match status" value="1"/>
</dbReference>
<dbReference type="Gene3D" id="3.30.420.40">
    <property type="match status" value="2"/>
</dbReference>
<dbReference type="HAMAP" id="MF_01274">
    <property type="entry name" value="Pantothen_kinase_3"/>
    <property type="match status" value="1"/>
</dbReference>
<dbReference type="InterPro" id="IPR043129">
    <property type="entry name" value="ATPase_NBD"/>
</dbReference>
<dbReference type="InterPro" id="IPR004619">
    <property type="entry name" value="Type_III_PanK"/>
</dbReference>
<dbReference type="NCBIfam" id="TIGR00671">
    <property type="entry name" value="baf"/>
    <property type="match status" value="1"/>
</dbReference>
<dbReference type="NCBIfam" id="NF009844">
    <property type="entry name" value="PRK13318.1-2"/>
    <property type="match status" value="1"/>
</dbReference>
<dbReference type="NCBIfam" id="NF009848">
    <property type="entry name" value="PRK13318.1-6"/>
    <property type="match status" value="1"/>
</dbReference>
<dbReference type="NCBIfam" id="NF009855">
    <property type="entry name" value="PRK13321.1"/>
    <property type="match status" value="1"/>
</dbReference>
<dbReference type="PANTHER" id="PTHR34265">
    <property type="entry name" value="TYPE III PANTOTHENATE KINASE"/>
    <property type="match status" value="1"/>
</dbReference>
<dbReference type="PANTHER" id="PTHR34265:SF1">
    <property type="entry name" value="TYPE III PANTOTHENATE KINASE"/>
    <property type="match status" value="1"/>
</dbReference>
<dbReference type="Pfam" id="PF03309">
    <property type="entry name" value="Pan_kinase"/>
    <property type="match status" value="1"/>
</dbReference>
<dbReference type="SUPFAM" id="SSF53067">
    <property type="entry name" value="Actin-like ATPase domain"/>
    <property type="match status" value="2"/>
</dbReference>
<comment type="function">
    <text evidence="1">Catalyzes the phosphorylation of pantothenate (Pan), the first step in CoA biosynthesis.</text>
</comment>
<comment type="catalytic activity">
    <reaction evidence="1">
        <text>(R)-pantothenate + ATP = (R)-4'-phosphopantothenate + ADP + H(+)</text>
        <dbReference type="Rhea" id="RHEA:16373"/>
        <dbReference type="ChEBI" id="CHEBI:10986"/>
        <dbReference type="ChEBI" id="CHEBI:15378"/>
        <dbReference type="ChEBI" id="CHEBI:29032"/>
        <dbReference type="ChEBI" id="CHEBI:30616"/>
        <dbReference type="ChEBI" id="CHEBI:456216"/>
        <dbReference type="EC" id="2.7.1.33"/>
    </reaction>
</comment>
<comment type="cofactor">
    <cofactor evidence="1">
        <name>NH4(+)</name>
        <dbReference type="ChEBI" id="CHEBI:28938"/>
    </cofactor>
    <cofactor evidence="1">
        <name>K(+)</name>
        <dbReference type="ChEBI" id="CHEBI:29103"/>
    </cofactor>
    <text evidence="1">A monovalent cation. Ammonium or potassium.</text>
</comment>
<comment type="pathway">
    <text evidence="1">Cofactor biosynthesis; coenzyme A biosynthesis; CoA from (R)-pantothenate: step 1/5.</text>
</comment>
<comment type="subunit">
    <text evidence="1">Homodimer.</text>
</comment>
<comment type="subcellular location">
    <subcellularLocation>
        <location evidence="1">Cytoplasm</location>
    </subcellularLocation>
</comment>
<comment type="similarity">
    <text evidence="1">Belongs to the type III pantothenate kinase family.</text>
</comment>